<feature type="chain" id="PRO_0000155043" description="Probable elongation factor 1-beta/1-delta 1">
    <location>
        <begin position="1"/>
        <end position="213"/>
    </location>
</feature>
<organism>
    <name type="scientific">Caenorhabditis elegans</name>
    <dbReference type="NCBI Taxonomy" id="6239"/>
    <lineage>
        <taxon>Eukaryota</taxon>
        <taxon>Metazoa</taxon>
        <taxon>Ecdysozoa</taxon>
        <taxon>Nematoda</taxon>
        <taxon>Chromadorea</taxon>
        <taxon>Rhabditida</taxon>
        <taxon>Rhabditina</taxon>
        <taxon>Rhabditomorpha</taxon>
        <taxon>Rhabditoidea</taxon>
        <taxon>Rhabditidae</taxon>
        <taxon>Peloderinae</taxon>
        <taxon>Caenorhabditis</taxon>
    </lineage>
</organism>
<reference key="1">
    <citation type="journal article" date="1994" name="Nature">
        <title>2.2 Mb of contiguous nucleotide sequence from chromosome III of C. elegans.</title>
        <authorList>
            <person name="Wilson R."/>
            <person name="Ainscough R."/>
            <person name="Anderson K."/>
            <person name="Baynes C."/>
            <person name="Berks M."/>
            <person name="Bonfield J."/>
            <person name="Burton J."/>
            <person name="Connell M."/>
            <person name="Copsey T."/>
            <person name="Cooper J."/>
            <person name="Coulson A."/>
            <person name="Craxton M."/>
            <person name="Dear S."/>
            <person name="Du Z."/>
            <person name="Durbin R."/>
            <person name="Favello A."/>
            <person name="Fraser A."/>
            <person name="Fulton L."/>
            <person name="Gardner A."/>
            <person name="Green P."/>
            <person name="Hawkins T."/>
            <person name="Hillier L."/>
            <person name="Jier M."/>
            <person name="Johnston L."/>
            <person name="Jones M."/>
            <person name="Kershaw J."/>
            <person name="Kirsten J."/>
            <person name="Laisster N."/>
            <person name="Latreille P."/>
            <person name="Lightning J."/>
            <person name="Lloyd C."/>
            <person name="Mortimore B."/>
            <person name="O'Callaghan M."/>
            <person name="Parsons J."/>
            <person name="Percy C."/>
            <person name="Rifken L."/>
            <person name="Roopra A."/>
            <person name="Saunders D."/>
            <person name="Shownkeen R."/>
            <person name="Sims M."/>
            <person name="Smaldon N."/>
            <person name="Smith A."/>
            <person name="Smith M."/>
            <person name="Sonnhammer E."/>
            <person name="Staden R."/>
            <person name="Sulston J."/>
            <person name="Thierry-Mieg J."/>
            <person name="Thomas K."/>
            <person name="Vaudin M."/>
            <person name="Vaughan K."/>
            <person name="Waterston R."/>
            <person name="Watson A."/>
            <person name="Weinstock L."/>
            <person name="Wilkinson-Sproat J."/>
            <person name="Wohldman P."/>
        </authorList>
    </citation>
    <scope>NUCLEOTIDE SEQUENCE [LARGE SCALE GENOMIC DNA]</scope>
    <source>
        <strain>Bristol N2</strain>
    </source>
</reference>
<reference key="2">
    <citation type="journal article" date="1998" name="Science">
        <title>Genome sequence of the nematode C. elegans: a platform for investigating biology.</title>
        <authorList>
            <consortium name="The C. elegans sequencing consortium"/>
        </authorList>
    </citation>
    <scope>NUCLEOTIDE SEQUENCE [LARGE SCALE GENOMIC DNA]</scope>
    <source>
        <strain>Bristol N2</strain>
    </source>
</reference>
<reference key="3">
    <citation type="submission" date="2005-09" db="UniProtKB">
        <authorList>
            <person name="Bienvenut W.V."/>
        </authorList>
    </citation>
    <scope>PROTEIN SEQUENCE OF 110-116; 151-172 AND 185-193</scope>
    <scope>IDENTIFICATION BY MASS SPECTROMETRY</scope>
</reference>
<keyword id="KW-0903">Direct protein sequencing</keyword>
<keyword id="KW-0251">Elongation factor</keyword>
<keyword id="KW-0648">Protein biosynthesis</keyword>
<keyword id="KW-1185">Reference proteome</keyword>
<evidence type="ECO:0000305" key="1"/>
<name>EF1B1_CAEEL</name>
<gene>
    <name type="primary">eef-1B.1</name>
    <name type="ORF">F54H12.6</name>
</gene>
<dbReference type="EMBL" id="FO080401">
    <property type="protein sequence ID" value="CCD63459.1"/>
    <property type="molecule type" value="Genomic_DNA"/>
</dbReference>
<dbReference type="PIR" id="S44832">
    <property type="entry name" value="S44832"/>
</dbReference>
<dbReference type="RefSeq" id="NP_498737.1">
    <property type="nucleotide sequence ID" value="NM_066336.8"/>
</dbReference>
<dbReference type="SMR" id="P34460"/>
<dbReference type="BioGRID" id="41326">
    <property type="interactions" value="79"/>
</dbReference>
<dbReference type="DIP" id="DIP-24506N"/>
<dbReference type="FunCoup" id="P34460">
    <property type="interactions" value="2276"/>
</dbReference>
<dbReference type="STRING" id="6239.F54H12.6.1"/>
<dbReference type="iPTMnet" id="P34460"/>
<dbReference type="PaxDb" id="6239-F54H12.6"/>
<dbReference type="PeptideAtlas" id="P34460"/>
<dbReference type="EnsemblMetazoa" id="F54H12.6.1">
    <property type="protein sequence ID" value="F54H12.6.1"/>
    <property type="gene ID" value="WBGene00018846"/>
</dbReference>
<dbReference type="GeneID" id="176120"/>
<dbReference type="KEGG" id="cel:CELE_F54H12.6"/>
<dbReference type="UCSC" id="F54H12.6">
    <property type="organism name" value="c. elegans"/>
</dbReference>
<dbReference type="AGR" id="WB:WBGene00018846"/>
<dbReference type="CTD" id="176120"/>
<dbReference type="WormBase" id="F54H12.6">
    <property type="protein sequence ID" value="CE00548"/>
    <property type="gene ID" value="WBGene00018846"/>
    <property type="gene designation" value="eef-1B.1"/>
</dbReference>
<dbReference type="eggNOG" id="KOG1668">
    <property type="taxonomic scope" value="Eukaryota"/>
</dbReference>
<dbReference type="GeneTree" id="ENSGT00950000183014"/>
<dbReference type="HOGENOM" id="CLU_050172_0_2_1"/>
<dbReference type="InParanoid" id="P34460"/>
<dbReference type="OMA" id="NVARWFA"/>
<dbReference type="OrthoDB" id="331763at2759"/>
<dbReference type="PhylomeDB" id="P34460"/>
<dbReference type="PRO" id="PR:P34460"/>
<dbReference type="Proteomes" id="UP000001940">
    <property type="component" value="Chromosome III"/>
</dbReference>
<dbReference type="Bgee" id="WBGene00018846">
    <property type="expression patterns" value="Expressed in germ line (C elegans) and 4 other cell types or tissues"/>
</dbReference>
<dbReference type="GO" id="GO:0005829">
    <property type="term" value="C:cytosol"/>
    <property type="evidence" value="ECO:0000318"/>
    <property type="project" value="GO_Central"/>
</dbReference>
<dbReference type="GO" id="GO:0005853">
    <property type="term" value="C:eukaryotic translation elongation factor 1 complex"/>
    <property type="evidence" value="ECO:0007669"/>
    <property type="project" value="InterPro"/>
</dbReference>
<dbReference type="GO" id="GO:0005085">
    <property type="term" value="F:guanyl-nucleotide exchange factor activity"/>
    <property type="evidence" value="ECO:0000318"/>
    <property type="project" value="GO_Central"/>
</dbReference>
<dbReference type="GO" id="GO:0003746">
    <property type="term" value="F:translation elongation factor activity"/>
    <property type="evidence" value="ECO:0007669"/>
    <property type="project" value="UniProtKB-KW"/>
</dbReference>
<dbReference type="GO" id="GO:0006414">
    <property type="term" value="P:translational elongation"/>
    <property type="evidence" value="ECO:0000318"/>
    <property type="project" value="GO_Central"/>
</dbReference>
<dbReference type="CDD" id="cd00292">
    <property type="entry name" value="EF1B"/>
    <property type="match status" value="1"/>
</dbReference>
<dbReference type="FunFam" id="3.30.70.60:FF:000001">
    <property type="entry name" value="Elongation factor 1-beta 1 like"/>
    <property type="match status" value="1"/>
</dbReference>
<dbReference type="Gene3D" id="3.30.70.60">
    <property type="match status" value="1"/>
</dbReference>
<dbReference type="InterPro" id="IPR036219">
    <property type="entry name" value="eEF-1beta-like_sf"/>
</dbReference>
<dbReference type="InterPro" id="IPR018940">
    <property type="entry name" value="EF-1_beta_acid_region_euk"/>
</dbReference>
<dbReference type="InterPro" id="IPR049720">
    <property type="entry name" value="EF1B_bsu/dsu"/>
</dbReference>
<dbReference type="InterPro" id="IPR014038">
    <property type="entry name" value="EF1B_bsu/dsu_GNE"/>
</dbReference>
<dbReference type="InterPro" id="IPR036282">
    <property type="entry name" value="Glutathione-S-Trfase_C_sf"/>
</dbReference>
<dbReference type="InterPro" id="IPR014717">
    <property type="entry name" value="Transl_elong_EF1B/ribsomal_bS6"/>
</dbReference>
<dbReference type="InterPro" id="IPR001326">
    <property type="entry name" value="Transl_elong_EF1B_B/D_CS"/>
</dbReference>
<dbReference type="PANTHER" id="PTHR11595">
    <property type="entry name" value="EF-HAND AND COILED-COIL DOMAIN-CONTAINING FAMILY MEMBER"/>
    <property type="match status" value="1"/>
</dbReference>
<dbReference type="PANTHER" id="PTHR11595:SF21">
    <property type="entry name" value="ELONGATION FACTOR 1-BETA"/>
    <property type="match status" value="1"/>
</dbReference>
<dbReference type="Pfam" id="PF10587">
    <property type="entry name" value="EF-1_beta_acid"/>
    <property type="match status" value="1"/>
</dbReference>
<dbReference type="Pfam" id="PF00736">
    <property type="entry name" value="EF1_GNE"/>
    <property type="match status" value="1"/>
</dbReference>
<dbReference type="SMART" id="SM01182">
    <property type="entry name" value="EF-1_beta_acid"/>
    <property type="match status" value="1"/>
</dbReference>
<dbReference type="SMART" id="SM00888">
    <property type="entry name" value="EF1_GNE"/>
    <property type="match status" value="1"/>
</dbReference>
<dbReference type="SUPFAM" id="SSF54984">
    <property type="entry name" value="eEF-1beta-like"/>
    <property type="match status" value="1"/>
</dbReference>
<dbReference type="SUPFAM" id="SSF47616">
    <property type="entry name" value="GST C-terminal domain-like"/>
    <property type="match status" value="1"/>
</dbReference>
<dbReference type="PROSITE" id="PS00824">
    <property type="entry name" value="EF1BD_1"/>
    <property type="match status" value="1"/>
</dbReference>
<dbReference type="PROSITE" id="PS00825">
    <property type="entry name" value="EF1BD_2"/>
    <property type="match status" value="1"/>
</dbReference>
<comment type="function">
    <text>EF-1-beta and EF-1-delta stimulate the exchange of GDP bound to EF-1-alpha to GTP.</text>
</comment>
<comment type="subunit">
    <text>EF-1 is composed of 4 subunits: alpha, beta, delta, and gamma.</text>
</comment>
<comment type="similarity">
    <text evidence="1">Belongs to the EF-1-beta/EF-1-delta family.</text>
</comment>
<sequence>MVADVKSPAGLAAFNTTLAEQAFATGFVLSGEDAQLFAALGSAPNASTYPNVARWYANVASYTDAERKTWASAGGSAPAAAAADGDDFDLFGSDDEEEDAEKAKIVEERLAAYAEKKAKKAGPIAKSSVILDVKPWDDETDLGEMEKLVRSIEMDGLVWGGAKLIPIGYGIKKLQIITVIEDLKVSVDDLIEKITGDFEDHVQSVDIVAFNKI</sequence>
<protein>
    <recommendedName>
        <fullName>Probable elongation factor 1-beta/1-delta 1</fullName>
        <shortName>EF-1-beta/delta 1</shortName>
    </recommendedName>
</protein>
<accession>P34460</accession>
<proteinExistence type="evidence at protein level"/>